<accession>Q58740</accession>
<sequence>MKKVEAIIRPEKLEIVKKALSDAGYVGMTVSEVKGRGVQGGIVERYRGREYIVDLIPKVKIELVVKEEDVDNVIDIICENARTGNPGDGKIFVIPVERVVRVRTKEEGRDVL</sequence>
<protein>
    <recommendedName>
        <fullName evidence="3">Nitrogen regulatory protein GlnK2</fullName>
    </recommendedName>
</protein>
<comment type="function">
    <text evidence="3">Involved in the regulation of nitrogen metabolism (By similarity). Regulates the activity of its targets by protein-protein interaction in response to the nitrogen status of the cell (By similarity). Regulates the activity of the ammonia channel Amt2 via direct interaction (By similarity).</text>
</comment>
<comment type="subunit">
    <text evidence="3">Homotrimer (By similarity). Interacts and forms a complex with Amt2 (By similarity).</text>
</comment>
<comment type="subcellular location">
    <subcellularLocation>
        <location evidence="1">Cytoplasm</location>
    </subcellularLocation>
</comment>
<comment type="similarity">
    <text evidence="4">Belongs to the P(II) protein family.</text>
</comment>
<feature type="chain" id="PRO_0000139816" description="Nitrogen regulatory protein GlnK2">
    <location>
        <begin position="1"/>
        <end position="112"/>
    </location>
</feature>
<feature type="binding site" evidence="2">
    <location>
        <position position="29"/>
    </location>
    <ligand>
        <name>ADP</name>
        <dbReference type="ChEBI" id="CHEBI:456216"/>
    </ligand>
</feature>
<feature type="binding site" evidence="2">
    <location>
        <position position="29"/>
    </location>
    <ligand>
        <name>ATP</name>
        <dbReference type="ChEBI" id="CHEBI:30616"/>
    </ligand>
</feature>
<feature type="binding site" evidence="2">
    <location>
        <begin position="37"/>
        <end position="39"/>
    </location>
    <ligand>
        <name>ADP</name>
        <dbReference type="ChEBI" id="CHEBI:456216"/>
    </ligand>
</feature>
<feature type="binding site" evidence="2">
    <location>
        <begin position="37"/>
        <end position="39"/>
    </location>
    <ligand>
        <name>ATP</name>
        <dbReference type="ChEBI" id="CHEBI:30616"/>
    </ligand>
</feature>
<feature type="binding site" evidence="2">
    <location>
        <position position="64"/>
    </location>
    <ligand>
        <name>ADP</name>
        <dbReference type="ChEBI" id="CHEBI:456216"/>
    </ligand>
</feature>
<feature type="binding site" evidence="2">
    <location>
        <position position="64"/>
    </location>
    <ligand>
        <name>ATP</name>
        <dbReference type="ChEBI" id="CHEBI:30616"/>
    </ligand>
</feature>
<feature type="binding site" evidence="2">
    <location>
        <begin position="87"/>
        <end position="90"/>
    </location>
    <ligand>
        <name>ADP</name>
        <dbReference type="ChEBI" id="CHEBI:456216"/>
    </ligand>
</feature>
<feature type="binding site" evidence="2">
    <location>
        <begin position="87"/>
        <end position="90"/>
    </location>
    <ligand>
        <name>ATP</name>
        <dbReference type="ChEBI" id="CHEBI:30616"/>
    </ligand>
</feature>
<gene>
    <name evidence="5" type="primary">glnK2</name>
    <name type="ordered locus">MJ1344</name>
</gene>
<proteinExistence type="inferred from homology"/>
<reference key="1">
    <citation type="journal article" date="1996" name="Science">
        <title>Complete genome sequence of the methanogenic archaeon, Methanococcus jannaschii.</title>
        <authorList>
            <person name="Bult C.J."/>
            <person name="White O."/>
            <person name="Olsen G.J."/>
            <person name="Zhou L."/>
            <person name="Fleischmann R.D."/>
            <person name="Sutton G.G."/>
            <person name="Blake J.A."/>
            <person name="FitzGerald L.M."/>
            <person name="Clayton R.A."/>
            <person name="Gocayne J.D."/>
            <person name="Kerlavage A.R."/>
            <person name="Dougherty B.A."/>
            <person name="Tomb J.-F."/>
            <person name="Adams M.D."/>
            <person name="Reich C.I."/>
            <person name="Overbeek R."/>
            <person name="Kirkness E.F."/>
            <person name="Weinstock K.G."/>
            <person name="Merrick J.M."/>
            <person name="Glodek A."/>
            <person name="Scott J.L."/>
            <person name="Geoghagen N.S.M."/>
            <person name="Weidman J.F."/>
            <person name="Fuhrmann J.L."/>
            <person name="Nguyen D."/>
            <person name="Utterback T.R."/>
            <person name="Kelley J.M."/>
            <person name="Peterson J.D."/>
            <person name="Sadow P.W."/>
            <person name="Hanna M.C."/>
            <person name="Cotton M.D."/>
            <person name="Roberts K.M."/>
            <person name="Hurst M.A."/>
            <person name="Kaine B.P."/>
            <person name="Borodovsky M."/>
            <person name="Klenk H.-P."/>
            <person name="Fraser C.M."/>
            <person name="Smith H.O."/>
            <person name="Woese C.R."/>
            <person name="Venter J.C."/>
        </authorList>
    </citation>
    <scope>NUCLEOTIDE SEQUENCE [LARGE SCALE GENOMIC DNA]</scope>
    <source>
        <strain>ATCC 43067 / DSM 2661 / JAL-1 / JCM 10045 / NBRC 100440</strain>
    </source>
</reference>
<name>GLNK2_METJA</name>
<evidence type="ECO:0000250" key="1">
    <source>
        <dbReference type="UniProtKB" id="B8ZYW0"/>
    </source>
</evidence>
<evidence type="ECO:0000250" key="2">
    <source>
        <dbReference type="UniProtKB" id="O28524"/>
    </source>
</evidence>
<evidence type="ECO:0000250" key="3">
    <source>
        <dbReference type="UniProtKB" id="Q60381"/>
    </source>
</evidence>
<evidence type="ECO:0000255" key="4">
    <source>
        <dbReference type="PROSITE-ProRule" id="PRU00675"/>
    </source>
</evidence>
<evidence type="ECO:0000305" key="5"/>
<organism>
    <name type="scientific">Methanocaldococcus jannaschii (strain ATCC 43067 / DSM 2661 / JAL-1 / JCM 10045 / NBRC 100440)</name>
    <name type="common">Methanococcus jannaschii</name>
    <dbReference type="NCBI Taxonomy" id="243232"/>
    <lineage>
        <taxon>Archaea</taxon>
        <taxon>Methanobacteriati</taxon>
        <taxon>Methanobacteriota</taxon>
        <taxon>Methanomada group</taxon>
        <taxon>Methanococci</taxon>
        <taxon>Methanococcales</taxon>
        <taxon>Methanocaldococcaceae</taxon>
        <taxon>Methanocaldococcus</taxon>
    </lineage>
</organism>
<keyword id="KW-0067">ATP-binding</keyword>
<keyword id="KW-0963">Cytoplasm</keyword>
<keyword id="KW-0547">Nucleotide-binding</keyword>
<keyword id="KW-1185">Reference proteome</keyword>
<dbReference type="EMBL" id="L77117">
    <property type="protein sequence ID" value="AAB99353.1"/>
    <property type="molecule type" value="Genomic_DNA"/>
</dbReference>
<dbReference type="PIR" id="G64467">
    <property type="entry name" value="G64467"/>
</dbReference>
<dbReference type="RefSeq" id="WP_010870862.1">
    <property type="nucleotide sequence ID" value="NC_000909.1"/>
</dbReference>
<dbReference type="SMR" id="Q58740"/>
<dbReference type="FunCoup" id="Q58740">
    <property type="interactions" value="46"/>
</dbReference>
<dbReference type="STRING" id="243232.MJ_1344"/>
<dbReference type="PaxDb" id="243232-MJ_1344"/>
<dbReference type="EnsemblBacteria" id="AAB99353">
    <property type="protein sequence ID" value="AAB99353"/>
    <property type="gene ID" value="MJ_1344"/>
</dbReference>
<dbReference type="GeneID" id="1452247"/>
<dbReference type="KEGG" id="mja:MJ_1344"/>
<dbReference type="eggNOG" id="arCOG02305">
    <property type="taxonomic scope" value="Archaea"/>
</dbReference>
<dbReference type="HOGENOM" id="CLU_082268_0_0_2"/>
<dbReference type="InParanoid" id="Q58740"/>
<dbReference type="OrthoDB" id="10960at2157"/>
<dbReference type="PhylomeDB" id="Q58740"/>
<dbReference type="Proteomes" id="UP000000805">
    <property type="component" value="Chromosome"/>
</dbReference>
<dbReference type="GO" id="GO:0005829">
    <property type="term" value="C:cytosol"/>
    <property type="evidence" value="ECO:0000318"/>
    <property type="project" value="GO_Central"/>
</dbReference>
<dbReference type="GO" id="GO:0005524">
    <property type="term" value="F:ATP binding"/>
    <property type="evidence" value="ECO:0000318"/>
    <property type="project" value="GO_Central"/>
</dbReference>
<dbReference type="GO" id="GO:0030234">
    <property type="term" value="F:enzyme regulator activity"/>
    <property type="evidence" value="ECO:0000318"/>
    <property type="project" value="GO_Central"/>
</dbReference>
<dbReference type="GO" id="GO:0006808">
    <property type="term" value="P:regulation of nitrogen utilization"/>
    <property type="evidence" value="ECO:0000318"/>
    <property type="project" value="GO_Central"/>
</dbReference>
<dbReference type="Gene3D" id="3.30.70.120">
    <property type="match status" value="1"/>
</dbReference>
<dbReference type="InterPro" id="IPR002187">
    <property type="entry name" value="N-reg_PII"/>
</dbReference>
<dbReference type="InterPro" id="IPR011322">
    <property type="entry name" value="N-reg_PII-like_a/b"/>
</dbReference>
<dbReference type="InterPro" id="IPR015867">
    <property type="entry name" value="N-reg_PII/ATP_PRibTrfase_C"/>
</dbReference>
<dbReference type="InterPro" id="IPR017918">
    <property type="entry name" value="N-reg_PII_CS"/>
</dbReference>
<dbReference type="PANTHER" id="PTHR30115">
    <property type="entry name" value="NITROGEN REGULATORY PROTEIN P-II"/>
    <property type="match status" value="1"/>
</dbReference>
<dbReference type="PANTHER" id="PTHR30115:SF11">
    <property type="entry name" value="NITROGEN REGULATORY PROTEIN P-II HOMOLOG"/>
    <property type="match status" value="1"/>
</dbReference>
<dbReference type="Pfam" id="PF00543">
    <property type="entry name" value="P-II"/>
    <property type="match status" value="1"/>
</dbReference>
<dbReference type="PRINTS" id="PR00340">
    <property type="entry name" value="PIIGLNB"/>
</dbReference>
<dbReference type="SMART" id="SM00938">
    <property type="entry name" value="P-II"/>
    <property type="match status" value="1"/>
</dbReference>
<dbReference type="SUPFAM" id="SSF54913">
    <property type="entry name" value="GlnB-like"/>
    <property type="match status" value="1"/>
</dbReference>
<dbReference type="PROSITE" id="PS00638">
    <property type="entry name" value="PII_GLNB_CTER"/>
    <property type="match status" value="1"/>
</dbReference>
<dbReference type="PROSITE" id="PS51343">
    <property type="entry name" value="PII_GLNB_DOM"/>
    <property type="match status" value="1"/>
</dbReference>